<name>TRY4_RAT</name>
<gene>
    <name evidence="3" type="primary">Try4</name>
</gene>
<feature type="signal peptide">
    <location>
        <begin position="1"/>
        <end position="15"/>
    </location>
</feature>
<feature type="propeptide" id="PRO_0000028213" description="Activation peptide">
    <location>
        <begin position="16"/>
        <end position="23"/>
    </location>
</feature>
<feature type="chain" id="PRO_0000028214" description="Trypsin-4">
    <location>
        <begin position="24"/>
        <end position="247"/>
    </location>
</feature>
<feature type="domain" description="Peptidase S1" evidence="4">
    <location>
        <begin position="24"/>
        <end position="245"/>
    </location>
</feature>
<feature type="active site" description="Charge relay system" evidence="1">
    <location>
        <position position="64"/>
    </location>
</feature>
<feature type="active site" description="Charge relay system" evidence="1">
    <location>
        <position position="108"/>
    </location>
</feature>
<feature type="active site" description="Charge relay system" evidence="1">
    <location>
        <position position="201"/>
    </location>
</feature>
<feature type="binding site" evidence="1">
    <location>
        <position position="76"/>
    </location>
    <ligand>
        <name>Ca(2+)</name>
        <dbReference type="ChEBI" id="CHEBI:29108"/>
    </ligand>
</feature>
<feature type="binding site" evidence="1">
    <location>
        <position position="78"/>
    </location>
    <ligand>
        <name>Ca(2+)</name>
        <dbReference type="ChEBI" id="CHEBI:29108"/>
    </ligand>
</feature>
<feature type="binding site" evidence="1">
    <location>
        <position position="81"/>
    </location>
    <ligand>
        <name>Ca(2+)</name>
        <dbReference type="ChEBI" id="CHEBI:29108"/>
    </ligand>
</feature>
<feature type="binding site" evidence="1">
    <location>
        <position position="86"/>
    </location>
    <ligand>
        <name>Ca(2+)</name>
        <dbReference type="ChEBI" id="CHEBI:29108"/>
    </ligand>
</feature>
<feature type="site" description="Cleavage; by CTRC" evidence="3">
    <location>
        <begin position="82"/>
        <end position="83"/>
    </location>
</feature>
<feature type="site" description="Cleavage; by autolysis" evidence="3">
    <location>
        <begin position="194"/>
        <end position="195"/>
    </location>
</feature>
<feature type="disulfide bond" evidence="4">
    <location>
        <begin position="30"/>
        <end position="161"/>
    </location>
</feature>
<feature type="disulfide bond" evidence="4">
    <location>
        <begin position="49"/>
        <end position="65"/>
    </location>
</feature>
<feature type="disulfide bond" evidence="4">
    <location>
        <begin position="133"/>
        <end position="234"/>
    </location>
</feature>
<feature type="disulfide bond" evidence="4">
    <location>
        <begin position="140"/>
        <end position="207"/>
    </location>
</feature>
<feature type="disulfide bond" evidence="4">
    <location>
        <begin position="172"/>
        <end position="186"/>
    </location>
</feature>
<feature type="disulfide bond" evidence="4">
    <location>
        <begin position="197"/>
        <end position="221"/>
    </location>
</feature>
<proteinExistence type="evidence at protein level"/>
<protein>
    <recommendedName>
        <fullName evidence="3">Trypsin-4</fullName>
        <ecNumber evidence="5">3.4.21.4</ecNumber>
    </recommendedName>
    <alternativeName>
        <fullName evidence="6">P23</fullName>
    </alternativeName>
    <alternativeName>
        <fullName>Pretrypsinogen IV</fullName>
    </alternativeName>
    <alternativeName>
        <fullName>Trypsin IV</fullName>
    </alternativeName>
</protein>
<evidence type="ECO:0000250" key="1"/>
<evidence type="ECO:0000250" key="2">
    <source>
        <dbReference type="UniProtKB" id="P35030"/>
    </source>
</evidence>
<evidence type="ECO:0000250" key="3">
    <source>
        <dbReference type="UniProtKB" id="Q9R0T7"/>
    </source>
</evidence>
<evidence type="ECO:0000255" key="4">
    <source>
        <dbReference type="PROSITE-ProRule" id="PRU00274"/>
    </source>
</evidence>
<evidence type="ECO:0000269" key="5">
    <source>
    </source>
</evidence>
<evidence type="ECO:0000303" key="6">
    <source>
    </source>
</evidence>
<evidence type="ECO:0000305" key="7"/>
<accession>P12788</accession>
<organism>
    <name type="scientific">Rattus norvegicus</name>
    <name type="common">Rat</name>
    <dbReference type="NCBI Taxonomy" id="10116"/>
    <lineage>
        <taxon>Eukaryota</taxon>
        <taxon>Metazoa</taxon>
        <taxon>Chordata</taxon>
        <taxon>Craniata</taxon>
        <taxon>Vertebrata</taxon>
        <taxon>Euteleostomi</taxon>
        <taxon>Mammalia</taxon>
        <taxon>Eutheria</taxon>
        <taxon>Euarchontoglires</taxon>
        <taxon>Glires</taxon>
        <taxon>Rodentia</taxon>
        <taxon>Myomorpha</taxon>
        <taxon>Muroidea</taxon>
        <taxon>Muridae</taxon>
        <taxon>Murinae</taxon>
        <taxon>Rattus</taxon>
    </lineage>
</organism>
<sequence>MKISIFFAFLGAAVALPVNDDDKIVGGYTCPKHLVPYQVSLHDGISHQCGGSLISDQWVLSAAHCYKRKLQVRLGEHNIHVLEGGEQFIDAEKIIRHPEYNKDTLDNDIMLIKLKSPAVLNSQVSTVSLPRSCASTDAQCLVSGWGNTVSIGGKYPALLQCLEAPVLSASSCKKSYPGQITSNMFCLGFLEGGKDSCDGDSGGPVVCNGEIQGIVSWGSVCAMRGKPGVYTKVCNYLSWIQETMANN</sequence>
<dbReference type="EC" id="3.4.21.4" evidence="5"/>
<dbReference type="EMBL" id="X15679">
    <property type="protein sequence ID" value="CAA33718.1"/>
    <property type="molecule type" value="mRNA"/>
</dbReference>
<dbReference type="PIR" id="S05494">
    <property type="entry name" value="S05494"/>
</dbReference>
<dbReference type="RefSeq" id="NP_775423.1">
    <property type="nucleotide sequence ID" value="NM_173301.1"/>
</dbReference>
<dbReference type="SMR" id="P12788"/>
<dbReference type="FunCoup" id="P12788">
    <property type="interactions" value="97"/>
</dbReference>
<dbReference type="STRING" id="10116.ENSRNOP00000017852"/>
<dbReference type="MEROPS" id="S01.183"/>
<dbReference type="PaxDb" id="10116-ENSRNOP00000017852"/>
<dbReference type="Ensembl" id="ENSRNOT00000017852.4">
    <property type="protein sequence ID" value="ENSRNOP00000017852.3"/>
    <property type="gene ID" value="ENSRNOG00000013245.4"/>
</dbReference>
<dbReference type="GeneID" id="286960"/>
<dbReference type="KEGG" id="rno:286960"/>
<dbReference type="UCSC" id="RGD:708585">
    <property type="organism name" value="rat"/>
</dbReference>
<dbReference type="AGR" id="RGD:708585"/>
<dbReference type="CTD" id="286960"/>
<dbReference type="RGD" id="708585">
    <property type="gene designation" value="LOC286960"/>
</dbReference>
<dbReference type="eggNOG" id="KOG3627">
    <property type="taxonomic scope" value="Eukaryota"/>
</dbReference>
<dbReference type="GeneTree" id="ENSGT01050000244883"/>
<dbReference type="HOGENOM" id="CLU_006842_7_0_1"/>
<dbReference type="InParanoid" id="P12788"/>
<dbReference type="OMA" id="ACHKAYP"/>
<dbReference type="OrthoDB" id="10059102at2759"/>
<dbReference type="PhylomeDB" id="P12788"/>
<dbReference type="TreeFam" id="TF331065"/>
<dbReference type="PRO" id="PR:P12788"/>
<dbReference type="Proteomes" id="UP000002494">
    <property type="component" value="Chromosome 4"/>
</dbReference>
<dbReference type="Bgee" id="ENSRNOG00000013245">
    <property type="expression patterns" value="Expressed in pancreas and 2 other cell types or tissues"/>
</dbReference>
<dbReference type="GO" id="GO:0005615">
    <property type="term" value="C:extracellular space"/>
    <property type="evidence" value="ECO:0000318"/>
    <property type="project" value="GO_Central"/>
</dbReference>
<dbReference type="GO" id="GO:0046872">
    <property type="term" value="F:metal ion binding"/>
    <property type="evidence" value="ECO:0007669"/>
    <property type="project" value="UniProtKB-KW"/>
</dbReference>
<dbReference type="GO" id="GO:0004252">
    <property type="term" value="F:serine-type endopeptidase activity"/>
    <property type="evidence" value="ECO:0000318"/>
    <property type="project" value="GO_Central"/>
</dbReference>
<dbReference type="GO" id="GO:0007586">
    <property type="term" value="P:digestion"/>
    <property type="evidence" value="ECO:0007669"/>
    <property type="project" value="UniProtKB-KW"/>
</dbReference>
<dbReference type="GO" id="GO:0006508">
    <property type="term" value="P:proteolysis"/>
    <property type="evidence" value="ECO:0007669"/>
    <property type="project" value="UniProtKB-KW"/>
</dbReference>
<dbReference type="CDD" id="cd00190">
    <property type="entry name" value="Tryp_SPc"/>
    <property type="match status" value="1"/>
</dbReference>
<dbReference type="FunFam" id="2.40.10.10:FF:000008">
    <property type="entry name" value="Cationic trypsin"/>
    <property type="match status" value="1"/>
</dbReference>
<dbReference type="FunFam" id="2.40.10.10:FF:000005">
    <property type="entry name" value="Serine protease 37"/>
    <property type="match status" value="1"/>
</dbReference>
<dbReference type="Gene3D" id="2.40.10.10">
    <property type="entry name" value="Trypsin-like serine proteases"/>
    <property type="match status" value="2"/>
</dbReference>
<dbReference type="InterPro" id="IPR009003">
    <property type="entry name" value="Peptidase_S1_PA"/>
</dbReference>
<dbReference type="InterPro" id="IPR043504">
    <property type="entry name" value="Peptidase_S1_PA_chymotrypsin"/>
</dbReference>
<dbReference type="InterPro" id="IPR001314">
    <property type="entry name" value="Peptidase_S1A"/>
</dbReference>
<dbReference type="InterPro" id="IPR050127">
    <property type="entry name" value="Serine_Proteases_S1"/>
</dbReference>
<dbReference type="InterPro" id="IPR001254">
    <property type="entry name" value="Trypsin_dom"/>
</dbReference>
<dbReference type="InterPro" id="IPR018114">
    <property type="entry name" value="TRYPSIN_HIS"/>
</dbReference>
<dbReference type="InterPro" id="IPR033116">
    <property type="entry name" value="TRYPSIN_SER"/>
</dbReference>
<dbReference type="PANTHER" id="PTHR24264:SF13">
    <property type="entry name" value="RIKEN CDNA 1810009J06 GENE-RELATED"/>
    <property type="match status" value="1"/>
</dbReference>
<dbReference type="PANTHER" id="PTHR24264">
    <property type="entry name" value="TRYPSIN-RELATED"/>
    <property type="match status" value="1"/>
</dbReference>
<dbReference type="Pfam" id="PF00089">
    <property type="entry name" value="Trypsin"/>
    <property type="match status" value="1"/>
</dbReference>
<dbReference type="PRINTS" id="PR00722">
    <property type="entry name" value="CHYMOTRYPSIN"/>
</dbReference>
<dbReference type="SMART" id="SM00020">
    <property type="entry name" value="Tryp_SPc"/>
    <property type="match status" value="1"/>
</dbReference>
<dbReference type="SUPFAM" id="SSF50494">
    <property type="entry name" value="Trypsin-like serine proteases"/>
    <property type="match status" value="1"/>
</dbReference>
<dbReference type="PROSITE" id="PS50240">
    <property type="entry name" value="TRYPSIN_DOM"/>
    <property type="match status" value="1"/>
</dbReference>
<dbReference type="PROSITE" id="PS00134">
    <property type="entry name" value="TRYPSIN_HIS"/>
    <property type="match status" value="1"/>
</dbReference>
<dbReference type="PROSITE" id="PS00135">
    <property type="entry name" value="TRYPSIN_SER"/>
    <property type="match status" value="1"/>
</dbReference>
<comment type="function">
    <text evidence="3">Serine protease capable of autoactivation.</text>
</comment>
<comment type="catalytic activity">
    <reaction evidence="5">
        <text>Preferential cleavage: Arg-|-Xaa, Lys-|-Xaa.</text>
        <dbReference type="EC" id="3.4.21.4"/>
    </reaction>
</comment>
<comment type="cofactor">
    <cofactor evidence="2">
        <name>Ca(2+)</name>
        <dbReference type="ChEBI" id="CHEBI:29108"/>
    </cofactor>
    <text evidence="2">Binds 1 Ca(2+) ion per subunit.</text>
</comment>
<comment type="activity regulation">
    <text evidence="3">Activated by autocatalytic cleavage (By similarity). Cleavage by CTRC inhibits autoactivation (By similarity).</text>
</comment>
<comment type="subcellular location">
    <subcellularLocation>
        <location evidence="7">Secreted</location>
        <location evidence="7">Extracellular space</location>
    </subcellularLocation>
</comment>
<comment type="PTM">
    <text evidence="3">Proteolytically cleaved and activated by an autocatalytic mechanism (By similarity). Cleavage by CTRC inhibits autoactivation (By similarity).</text>
</comment>
<comment type="similarity">
    <text evidence="4">Belongs to the peptidase S1 family.</text>
</comment>
<reference key="1">
    <citation type="journal article" date="1989" name="Nucleic Acids Res.">
        <title>A fourth trypsinogen (P23) in the rat pancreas induced by CCK.</title>
        <authorList>
            <person name="Luetcke H.A."/>
            <person name="Rausch U."/>
            <person name="Vasiloudes P."/>
            <person name="Scheele G.A."/>
            <person name="Kern H.F."/>
        </authorList>
    </citation>
    <scope>NUCLEOTIDE SEQUENCE [MRNA]</scope>
    <scope>CATALYTIC ACTIVITY</scope>
    <source>
        <strain>Wistar</strain>
        <tissue>Pancreas</tissue>
    </source>
</reference>
<keyword id="KW-0068">Autocatalytic cleavage</keyword>
<keyword id="KW-0106">Calcium</keyword>
<keyword id="KW-0222">Digestion</keyword>
<keyword id="KW-1015">Disulfide bond</keyword>
<keyword id="KW-0378">Hydrolase</keyword>
<keyword id="KW-0479">Metal-binding</keyword>
<keyword id="KW-0645">Protease</keyword>
<keyword id="KW-1185">Reference proteome</keyword>
<keyword id="KW-0964">Secreted</keyword>
<keyword id="KW-0720">Serine protease</keyword>
<keyword id="KW-0732">Signal</keyword>
<keyword id="KW-0865">Zymogen</keyword>